<name>AR19A_XENLA</name>
<sequence length="117" mass="12931">MSGENQETKAQEESSALEQKEIDDKVVSPEKSEEIKLKARYPNLGPKPGGSDFLRKRLQKGQKYFDSGDYNMAKAKMKNKQLPTAASDKTEVTGDHIPTPQDLPQRKPSLVASKLAG</sequence>
<proteinExistence type="evidence at protein level"/>
<organism>
    <name type="scientific">Xenopus laevis</name>
    <name type="common">African clawed frog</name>
    <dbReference type="NCBI Taxonomy" id="8355"/>
    <lineage>
        <taxon>Eukaryota</taxon>
        <taxon>Metazoa</taxon>
        <taxon>Chordata</taxon>
        <taxon>Craniata</taxon>
        <taxon>Vertebrata</taxon>
        <taxon>Euteleostomi</taxon>
        <taxon>Amphibia</taxon>
        <taxon>Batrachia</taxon>
        <taxon>Anura</taxon>
        <taxon>Pipoidea</taxon>
        <taxon>Pipidae</taxon>
        <taxon>Xenopodinae</taxon>
        <taxon>Xenopus</taxon>
        <taxon>Xenopus</taxon>
    </lineage>
</organism>
<comment type="function">
    <text evidence="3 4">Protein phosphatase inhibitor that specifically inhibits protein phosphatase 2A (PP2A) during mitosis. When phosphorylated at Ser-67 during mitosis, specifically interacts with ppp2r2d (PR55-delta) and inhibits its activity, leading to inactivation of PP2A, an essential condition to keep cyclin-B1-CDK1 activity high during M phase.</text>
</comment>
<comment type="subunit">
    <text evidence="3 4">Interacts (when phosphorylated at Ser-67) with ppp2r2d.</text>
</comment>
<comment type="subcellular location">
    <subcellularLocation>
        <location evidence="1">Cytoplasm</location>
    </subcellularLocation>
</comment>
<comment type="PTM">
    <text evidence="3 4">Phosphorylation at Ser-67 by gwl during mitosis is essential for interaction with ppp2r2d (PR55-delta) and subsequent inactivation of PP2A. Phosphorylated by PKA.</text>
</comment>
<comment type="similarity">
    <text evidence="5">Belongs to the endosulfine family.</text>
</comment>
<protein>
    <recommendedName>
        <fullName>cAMP-regulated phosphoprotein 19-A</fullName>
        <shortName>ARPP-19-A</shortName>
    </recommendedName>
</protein>
<gene>
    <name type="primary">arpp19-a</name>
    <name type="synonym">arpp19</name>
</gene>
<reference key="1">
    <citation type="submission" date="2004-07" db="EMBL/GenBank/DDBJ databases">
        <authorList>
            <consortium name="NIH - Xenopus Gene Collection (XGC) project"/>
        </authorList>
    </citation>
    <scope>NUCLEOTIDE SEQUENCE [LARGE SCALE MRNA]</scope>
    <source>
        <tissue>Heart</tissue>
    </source>
</reference>
<reference key="2">
    <citation type="journal article" date="2010" name="Science">
        <title>Greatwall phosphorylates an inhibitor of protein phosphatase 2A that is essential for mitosis.</title>
        <authorList>
            <person name="Mochida S."/>
            <person name="Maslen S.L."/>
            <person name="Skehel M."/>
            <person name="Hunt T."/>
        </authorList>
    </citation>
    <scope>FUNCTION</scope>
    <scope>INTERACTION WITH PPP2R2D</scope>
    <scope>PHOSPHORYLATION AT SER-28; SER-67; THR-99 AND SER-109</scope>
</reference>
<reference key="3">
    <citation type="journal article" date="2010" name="Science">
        <title>The substrate of Greatwall kinase, Arpp19, controls mitosis by inhibiting protein phosphatase 2A.</title>
        <authorList>
            <person name="Gharbi-Ayachi A."/>
            <person name="Labbe J.C."/>
            <person name="Burgess A."/>
            <person name="Vigneron S."/>
            <person name="Strub J.M."/>
            <person name="Brioudes E."/>
            <person name="Van-Dorsselaer A."/>
            <person name="Castro A."/>
            <person name="Lorca T."/>
        </authorList>
    </citation>
    <scope>FUNCTION</scope>
    <scope>INTERACTION WITH PPP2R2D</scope>
    <scope>PHOSPHORYLATION AT SER-67</scope>
    <scope>MUTAGENESIS OF SER-2; SER-51; SER-67; THR-93; THR-99; SER-109 AND SER-113</scope>
</reference>
<keyword id="KW-0131">Cell cycle</keyword>
<keyword id="KW-0132">Cell division</keyword>
<keyword id="KW-0963">Cytoplasm</keyword>
<keyword id="KW-0498">Mitosis</keyword>
<keyword id="KW-0597">Phosphoprotein</keyword>
<keyword id="KW-0650">Protein phosphatase inhibitor</keyword>
<keyword id="KW-1185">Reference proteome</keyword>
<dbReference type="EMBL" id="BC077215">
    <property type="protein sequence ID" value="AAH77215.1"/>
    <property type="molecule type" value="mRNA"/>
</dbReference>
<dbReference type="SMR" id="Q6DEB4"/>
<dbReference type="iPTMnet" id="Q6DEB4"/>
<dbReference type="DNASU" id="446469"/>
<dbReference type="GeneID" id="446469"/>
<dbReference type="KEGG" id="xla:446469"/>
<dbReference type="AGR" id="Xenbase:XB-GENE-953914"/>
<dbReference type="CTD" id="446469"/>
<dbReference type="Xenbase" id="XB-GENE-953914">
    <property type="gene designation" value="arpp19.L"/>
</dbReference>
<dbReference type="OMA" id="QMAKQKY"/>
<dbReference type="OrthoDB" id="5949865at2759"/>
<dbReference type="CD-CODE" id="78E86D56">
    <property type="entry name" value="Mitochondrial cloud"/>
</dbReference>
<dbReference type="Proteomes" id="UP000186698">
    <property type="component" value="Chromosome 3L"/>
</dbReference>
<dbReference type="Bgee" id="446469">
    <property type="expression patterns" value="Expressed in gastrula and 19 other cell types or tissues"/>
</dbReference>
<dbReference type="GO" id="GO:0005737">
    <property type="term" value="C:cytoplasm"/>
    <property type="evidence" value="ECO:0007669"/>
    <property type="project" value="UniProtKB-SubCell"/>
</dbReference>
<dbReference type="GO" id="GO:0005654">
    <property type="term" value="C:nucleoplasm"/>
    <property type="evidence" value="ECO:0000304"/>
    <property type="project" value="Reactome"/>
</dbReference>
<dbReference type="GO" id="GO:0019212">
    <property type="term" value="F:phosphatase inhibitor activity"/>
    <property type="evidence" value="ECO:0000314"/>
    <property type="project" value="UniProtKB"/>
</dbReference>
<dbReference type="GO" id="GO:0019901">
    <property type="term" value="F:protein kinase binding"/>
    <property type="evidence" value="ECO:0000353"/>
    <property type="project" value="UniProtKB"/>
</dbReference>
<dbReference type="GO" id="GO:0051721">
    <property type="term" value="F:protein phosphatase 2A binding"/>
    <property type="evidence" value="ECO:0000314"/>
    <property type="project" value="UniProtKB"/>
</dbReference>
<dbReference type="GO" id="GO:0004864">
    <property type="term" value="F:protein phosphatase inhibitor activity"/>
    <property type="evidence" value="ECO:0007669"/>
    <property type="project" value="UniProtKB-KW"/>
</dbReference>
<dbReference type="GO" id="GO:0019888">
    <property type="term" value="F:protein phosphatase regulator activity"/>
    <property type="evidence" value="ECO:0000314"/>
    <property type="project" value="UniProtKB"/>
</dbReference>
<dbReference type="GO" id="GO:0051301">
    <property type="term" value="P:cell division"/>
    <property type="evidence" value="ECO:0007669"/>
    <property type="project" value="UniProtKB-KW"/>
</dbReference>
<dbReference type="GO" id="GO:0000086">
    <property type="term" value="P:G2/M transition of mitotic cell cycle"/>
    <property type="evidence" value="ECO:0000314"/>
    <property type="project" value="UniProtKB"/>
</dbReference>
<dbReference type="GO" id="GO:0000278">
    <property type="term" value="P:mitotic cell cycle"/>
    <property type="evidence" value="ECO:0000314"/>
    <property type="project" value="UniProtKB"/>
</dbReference>
<dbReference type="InterPro" id="IPR006760">
    <property type="entry name" value="Endosulphine"/>
</dbReference>
<dbReference type="PANTHER" id="PTHR10358:SF4">
    <property type="entry name" value="CAMP-REGULATED PHOSPHOPROTEIN 19"/>
    <property type="match status" value="1"/>
</dbReference>
<dbReference type="PANTHER" id="PTHR10358">
    <property type="entry name" value="ENDOSULFINE"/>
    <property type="match status" value="1"/>
</dbReference>
<dbReference type="Pfam" id="PF04667">
    <property type="entry name" value="Endosulfine"/>
    <property type="match status" value="1"/>
</dbReference>
<accession>Q6DEB4</accession>
<evidence type="ECO:0000250" key="1"/>
<evidence type="ECO:0000256" key="2">
    <source>
        <dbReference type="SAM" id="MobiDB-lite"/>
    </source>
</evidence>
<evidence type="ECO:0000269" key="3">
    <source>
    </source>
</evidence>
<evidence type="ECO:0000269" key="4">
    <source>
    </source>
</evidence>
<evidence type="ECO:0000305" key="5"/>
<feature type="chain" id="PRO_0000408321" description="cAMP-regulated phosphoprotein 19-A">
    <location>
        <begin position="1"/>
        <end position="117"/>
    </location>
</feature>
<feature type="region of interest" description="Disordered" evidence="2">
    <location>
        <begin position="1"/>
        <end position="54"/>
    </location>
</feature>
<feature type="region of interest" description="Disordered" evidence="2">
    <location>
        <begin position="78"/>
        <end position="117"/>
    </location>
</feature>
<feature type="compositionally biased region" description="Basic and acidic residues" evidence="2">
    <location>
        <begin position="1"/>
        <end position="37"/>
    </location>
</feature>
<feature type="modified residue" description="Phosphoserine; by CDK2" evidence="3">
    <location>
        <position position="28"/>
    </location>
</feature>
<feature type="modified residue" description="Phosphoserine; by GWL" evidence="3 4">
    <location>
        <position position="67"/>
    </location>
</feature>
<feature type="modified residue" description="Phosphothreonine; by CDK2" evidence="3">
    <location>
        <position position="99"/>
    </location>
</feature>
<feature type="modified residue" description="Phosphoserine; by PKA" evidence="3">
    <location>
        <position position="109"/>
    </location>
</feature>
<feature type="mutagenesis site" description="Does not affect phosphorylation by GWL." evidence="4">
    <original>S</original>
    <variation>A</variation>
    <location>
        <position position="2"/>
    </location>
</feature>
<feature type="mutagenesis site" description="Does not affect phosphorylation by GWL." evidence="4">
    <original>S</original>
    <variation>A</variation>
    <location>
        <position position="51"/>
    </location>
</feature>
<feature type="mutagenesis site" description="Abolishes phosphorylation by GWL and ability to regulate mitosis." evidence="4">
    <original>S</original>
    <variation>A</variation>
    <location>
        <position position="67"/>
    </location>
</feature>
<feature type="mutagenesis site" description="Does not affect phosphorylation by GWL." evidence="4">
    <original>T</original>
    <variation>A</variation>
    <location>
        <position position="93"/>
    </location>
</feature>
<feature type="mutagenesis site" description="Does not affect phosphorylation by GWL." evidence="4">
    <original>T</original>
    <variation>A</variation>
    <location>
        <position position="99"/>
    </location>
</feature>
<feature type="mutagenesis site" description="Does not affect phosphorylation by GWL." evidence="4">
    <original>S</original>
    <variation>A</variation>
    <location>
        <position position="109"/>
    </location>
</feature>
<feature type="mutagenesis site" description="Does not affect phosphorylation by GWL." evidence="4">
    <original>S</original>
    <variation>A</variation>
    <location>
        <position position="113"/>
    </location>
</feature>